<accession>P62296</accession>
<protein>
    <recommendedName>
        <fullName>Abnormal spindle-like microcephaly-associated protein homolog</fullName>
    </recommendedName>
</protein>
<dbReference type="EMBL" id="AY485419">
    <property type="protein sequence ID" value="AAR98740.1"/>
    <property type="molecule type" value="mRNA"/>
</dbReference>
<dbReference type="RefSeq" id="NP_001266913.1">
    <property type="nucleotide sequence ID" value="NM_001279984.1"/>
</dbReference>
<dbReference type="STRING" id="39432.ENSSBOP00000014090"/>
<dbReference type="GeneID" id="101029242"/>
<dbReference type="CTD" id="259266"/>
<dbReference type="Proteomes" id="UP000233220">
    <property type="component" value="Whole Genome Shotgun Assembly"/>
</dbReference>
<dbReference type="GO" id="GO:0005737">
    <property type="term" value="C:cytoplasm"/>
    <property type="evidence" value="ECO:0007669"/>
    <property type="project" value="UniProtKB-SubCell"/>
</dbReference>
<dbReference type="GO" id="GO:0005634">
    <property type="term" value="C:nucleus"/>
    <property type="evidence" value="ECO:0007669"/>
    <property type="project" value="UniProtKB-SubCell"/>
</dbReference>
<dbReference type="GO" id="GO:0000922">
    <property type="term" value="C:spindle pole"/>
    <property type="evidence" value="ECO:0007669"/>
    <property type="project" value="TreeGrafter"/>
</dbReference>
<dbReference type="GO" id="GO:0005516">
    <property type="term" value="F:calmodulin binding"/>
    <property type="evidence" value="ECO:0007669"/>
    <property type="project" value="UniProtKB-KW"/>
</dbReference>
<dbReference type="GO" id="GO:0051301">
    <property type="term" value="P:cell division"/>
    <property type="evidence" value="ECO:0007669"/>
    <property type="project" value="UniProtKB-KW"/>
</dbReference>
<dbReference type="GO" id="GO:0051295">
    <property type="term" value="P:establishment of meiotic spindle localization"/>
    <property type="evidence" value="ECO:0007669"/>
    <property type="project" value="TreeGrafter"/>
</dbReference>
<dbReference type="GO" id="GO:0000278">
    <property type="term" value="P:mitotic cell cycle"/>
    <property type="evidence" value="ECO:0007669"/>
    <property type="project" value="TreeGrafter"/>
</dbReference>
<dbReference type="GO" id="GO:0007051">
    <property type="term" value="P:spindle organization"/>
    <property type="evidence" value="ECO:0007669"/>
    <property type="project" value="TreeGrafter"/>
</dbReference>
<dbReference type="CDD" id="cd21223">
    <property type="entry name" value="CH_ASPM_rpt1"/>
    <property type="match status" value="1"/>
</dbReference>
<dbReference type="CDD" id="cd21224">
    <property type="entry name" value="CH_ASPM_rpt2"/>
    <property type="match status" value="1"/>
</dbReference>
<dbReference type="FunFam" id="1.20.5.190:FF:000052">
    <property type="entry name" value="Abnormal spindle-like microcephaly-associated protein"/>
    <property type="match status" value="1"/>
</dbReference>
<dbReference type="FunFam" id="1.10.418.10:FF:000051">
    <property type="entry name" value="Abnormal spindle-like microcephaly-associated protein homolog"/>
    <property type="match status" value="1"/>
</dbReference>
<dbReference type="FunFam" id="1.20.5.190:FF:000008">
    <property type="entry name" value="Abnormal spindle-like microcephaly-associated protein homolog"/>
    <property type="match status" value="6"/>
</dbReference>
<dbReference type="FunFam" id="1.20.5.190:FF:000009">
    <property type="entry name" value="Abnormal spindle-like microcephaly-associated protein homolog"/>
    <property type="match status" value="4"/>
</dbReference>
<dbReference type="FunFam" id="1.20.5.190:FF:000010">
    <property type="entry name" value="Abnormal spindle-like microcephaly-associated protein homolog"/>
    <property type="match status" value="2"/>
</dbReference>
<dbReference type="FunFam" id="1.20.5.190:FF:000016">
    <property type="entry name" value="Abnormal spindle-like microcephaly-associated protein homolog"/>
    <property type="match status" value="1"/>
</dbReference>
<dbReference type="FunFam" id="1.20.5.190:FF:000023">
    <property type="entry name" value="Abnormal spindle-like microcephaly-associated protein homolog"/>
    <property type="match status" value="1"/>
</dbReference>
<dbReference type="FunFam" id="1.20.5.190:FF:000028">
    <property type="entry name" value="Abnormal spindle-like microcephaly-associated protein homolog"/>
    <property type="match status" value="1"/>
</dbReference>
<dbReference type="FunFam" id="1.20.5.190:FF:000030">
    <property type="entry name" value="Abnormal spindle-like microcephaly-associated protein homolog"/>
    <property type="match status" value="1"/>
</dbReference>
<dbReference type="FunFam" id="1.20.5.190:FF:000031">
    <property type="entry name" value="Abnormal spindle-like microcephaly-associated protein homolog"/>
    <property type="match status" value="1"/>
</dbReference>
<dbReference type="FunFam" id="1.20.5.190:FF:000032">
    <property type="entry name" value="Abnormal spindle-like microcephaly-associated protein homolog"/>
    <property type="match status" value="1"/>
</dbReference>
<dbReference type="FunFam" id="1.20.5.190:FF:000034">
    <property type="entry name" value="Abnormal spindle-like microcephaly-associated protein homolog"/>
    <property type="match status" value="1"/>
</dbReference>
<dbReference type="FunFam" id="1.20.5.190:FF:000053">
    <property type="entry name" value="Abnormal spindle-like microcephaly-associated protein homolog"/>
    <property type="match status" value="1"/>
</dbReference>
<dbReference type="FunFam" id="1.20.5.190:FF:000059">
    <property type="entry name" value="Abnormal spindle-like microcephaly-associated protein homolog"/>
    <property type="match status" value="1"/>
</dbReference>
<dbReference type="FunFam" id="2.60.40.10:FF:001429">
    <property type="entry name" value="Abnormal spindle-like microcephaly-associated protein homolog"/>
    <property type="match status" value="1"/>
</dbReference>
<dbReference type="Gene3D" id="1.20.5.190">
    <property type="match status" value="33"/>
</dbReference>
<dbReference type="Gene3D" id="1.10.418.10">
    <property type="entry name" value="Calponin-like domain"/>
    <property type="match status" value="2"/>
</dbReference>
<dbReference type="Gene3D" id="2.60.40.10">
    <property type="entry name" value="Immunoglobulins"/>
    <property type="match status" value="1"/>
</dbReference>
<dbReference type="Gene3D" id="1.25.10.10">
    <property type="entry name" value="Leucine-rich Repeat Variant"/>
    <property type="match status" value="1"/>
</dbReference>
<dbReference type="InterPro" id="IPR011989">
    <property type="entry name" value="ARM-like"/>
</dbReference>
<dbReference type="InterPro" id="IPR016024">
    <property type="entry name" value="ARM-type_fold"/>
</dbReference>
<dbReference type="InterPro" id="IPR031549">
    <property type="entry name" value="ASH"/>
</dbReference>
<dbReference type="InterPro" id="IPR051185">
    <property type="entry name" value="ASPM"/>
</dbReference>
<dbReference type="InterPro" id="IPR001715">
    <property type="entry name" value="CH_dom"/>
</dbReference>
<dbReference type="InterPro" id="IPR036872">
    <property type="entry name" value="CH_dom_sf"/>
</dbReference>
<dbReference type="InterPro" id="IPR013783">
    <property type="entry name" value="Ig-like_fold"/>
</dbReference>
<dbReference type="InterPro" id="IPR000048">
    <property type="entry name" value="IQ_motif_EF-hand-BS"/>
</dbReference>
<dbReference type="InterPro" id="IPR027417">
    <property type="entry name" value="P-loop_NTPase"/>
</dbReference>
<dbReference type="PANTHER" id="PTHR22706">
    <property type="entry name" value="ASSEMBLY FACTOR FOR SPINDLE MICROTUBULES"/>
    <property type="match status" value="1"/>
</dbReference>
<dbReference type="PANTHER" id="PTHR22706:SF1">
    <property type="entry name" value="ASSEMBLY FACTOR FOR SPINDLE MICROTUBULES"/>
    <property type="match status" value="1"/>
</dbReference>
<dbReference type="Pfam" id="PF15780">
    <property type="entry name" value="ASH"/>
    <property type="match status" value="1"/>
</dbReference>
<dbReference type="Pfam" id="PF00307">
    <property type="entry name" value="CH"/>
    <property type="match status" value="1"/>
</dbReference>
<dbReference type="Pfam" id="PF00612">
    <property type="entry name" value="IQ"/>
    <property type="match status" value="39"/>
</dbReference>
<dbReference type="SMART" id="SM00033">
    <property type="entry name" value="CH"/>
    <property type="match status" value="1"/>
</dbReference>
<dbReference type="SMART" id="SM00015">
    <property type="entry name" value="IQ"/>
    <property type="match status" value="61"/>
</dbReference>
<dbReference type="SUPFAM" id="SSF48371">
    <property type="entry name" value="ARM repeat"/>
    <property type="match status" value="1"/>
</dbReference>
<dbReference type="SUPFAM" id="SSF47576">
    <property type="entry name" value="Calponin-homology domain, CH-domain"/>
    <property type="match status" value="1"/>
</dbReference>
<dbReference type="SUPFAM" id="SSF52540">
    <property type="entry name" value="P-loop containing nucleoside triphosphate hydrolases"/>
    <property type="match status" value="17"/>
</dbReference>
<dbReference type="PROSITE" id="PS50021">
    <property type="entry name" value="CH"/>
    <property type="match status" value="2"/>
</dbReference>
<dbReference type="PROSITE" id="PS50096">
    <property type="entry name" value="IQ"/>
    <property type="match status" value="38"/>
</dbReference>
<comment type="function">
    <text evidence="1">Probable role in mitotic spindle regulation and coordination of mitotic processes. May have a preferential role in regulating neurogenesis (By similarity).</text>
</comment>
<comment type="subcellular location">
    <subcellularLocation>
        <location evidence="1">Cytoplasm</location>
    </subcellularLocation>
    <subcellularLocation>
        <location evidence="1">Cytoplasm</location>
        <location evidence="1">Cytoskeleton</location>
        <location evidence="1">Spindle</location>
    </subcellularLocation>
    <subcellularLocation>
        <location evidence="1">Nucleus</location>
    </subcellularLocation>
    <text evidence="1">The nuclear-cytoplasmic distribution could be regulated by the availability of calmodulin. Localizes to spindle poles during mitosis (By similarity).</text>
</comment>
<name>ASPM_SAIBB</name>
<proteinExistence type="evidence at transcript level"/>
<evidence type="ECO:0000250" key="1"/>
<evidence type="ECO:0000250" key="2">
    <source>
        <dbReference type="UniProtKB" id="Q8IZT6"/>
    </source>
</evidence>
<evidence type="ECO:0000255" key="3"/>
<evidence type="ECO:0000255" key="4">
    <source>
        <dbReference type="PROSITE-ProRule" id="PRU00044"/>
    </source>
</evidence>
<evidence type="ECO:0000255" key="5">
    <source>
        <dbReference type="PROSITE-ProRule" id="PRU00116"/>
    </source>
</evidence>
<evidence type="ECO:0000256" key="6">
    <source>
        <dbReference type="SAM" id="MobiDB-lite"/>
    </source>
</evidence>
<keyword id="KW-0112">Calmodulin-binding</keyword>
<keyword id="KW-0131">Cell cycle</keyword>
<keyword id="KW-0132">Cell division</keyword>
<keyword id="KW-0175">Coiled coil</keyword>
<keyword id="KW-0963">Cytoplasm</keyword>
<keyword id="KW-0206">Cytoskeleton</keyword>
<keyword id="KW-0498">Mitosis</keyword>
<keyword id="KW-0539">Nucleus</keyword>
<keyword id="KW-0597">Phosphoprotein</keyword>
<keyword id="KW-1185">Reference proteome</keyword>
<keyword id="KW-0677">Repeat</keyword>
<sequence>MATRRVGRGCWEVSPTERRPCAGLRGPAAEEEAASPPVLFLSHFCRSPFLCFGDVRLGTSRTLPLTLDNPNEEVAEVEISHLPAADLGFSVSQRRFVLQPKEKIVISVNWTPFKEGRVRETMTFLVNDVLKHQAILLGNAEEQKKKKRNLWDTIKKKKISASTSHNRRVSNIQNVKTFSVSQKVDRVRSPLHACENLAMNEGGPPTENNHLTLEENKILISPISPAFSECHGATCLPLSVRRSTAYSSLHALENRELLNVDSANVSKDNFNEKVVSETSFNSINVSDQSGENNKLILTPNYSSTLNITQSQRNFLSPDSFVNNSHGENNELELGTCLSSDMFMKDNPKPMLLESTTAREMYQKILSPDSFIKDNYGLNQNLESESVXSILSPNQMACMCTSQQTYKVPSSNENSQVPQSLQDWRKSKVFPCVPECQGSKSPKATFEELVEMKSNCCSFIKQNQPKFPAVKDISSHSHNKQPKRRPILSATVTKRKPTRTRENQTEINKPKAKRCLNSAVGENEKIINNQKEKEDFYSYLPIIDPVLSKSKSYKNEITPSLTTASVARKRKSDGSMGDANERVAVTEHTEVQEIKRIHFSPSEPKTATVKKTKNVITPISKCVSNREKLSLKKKTEFKTPIFKTSKRTKPIIAVAQSNLTFIKSLKTDIPRHPMPFAAKNMFYDERWKEKQEQGFTWWLNFILTPDDFTVKTNISEVNAATLLLGVENQHKISVPRAPTKEEMSLRAYTARCMLNRLRRAACRLFTSEKMVKAIKKLEIEIEARRLVVRKDRHLWKDVGERQKVLNWLLSYNPLWLRIGLETVYGELISLEDNSDVTGLAVFILSRLLWNPDIAAEYRHPTVPHLYGDGHEEALSKFTLKKLLLLVCFLDYAKISRLIDHDPCLFCKDAEFKASKEILLAFSRDFLSGEGDLSRHLGLLGLPVNHVQTPFDEFDFAVTNLAVDLQCGVRLVRTMELLTQNWDLSKKLRIPAISRLQKMHNVDIVLQVLKSRGIELSDEHGNTILSKNIVDRHREKTLGLLWKIVFAFQVNISLNLDQLKEEIAFLKHTKSIKKTVSLLSCHSDALTNKKKGKRDSGSFEQYGENIKLLMDWVNAVCAFYNKKVENFTVSFSDGRVLCYLIHHYHPCYVPFDAISQRTTQTVECTHTGSVVLNSSSESDESSLDMSLKAFDQENTSELYKELLENEKKNFHLVRSAVRDLGGIPAMINHSDMSNTIPDEKVVITYLSFLCARLLDLRKEIRAARLIQTTWRKYKLKTDLKRHQERDKAARIIQSAVINFLRKQRLRKTLNAALIIQKYWRRVLAQKKLLMLKKEKLERVQNKAASLIQGYWRRYSTRKRFLKLKYYSIVLQSRIRMIIAVTCYKRYLWATVTIQRHWRASLRRKQDQQRYEKLKSSSLIIQAMFRRWKQRKMQLQVKATITLQRAFREWHLRKRAKEEKSAIVIQSWYRMHKQLRKYVYVRSCVVIIQKRFRCFQAQKLYKRRKESILTIQKYYRAYLKGKIERTNYLQKRAAAIQLQAAFRRLKAHNLHRQIRAACVIQSYWRMRQDRVRFLNLKKIIIKLQAHVRKHQQLRKYKKMKKAAVIIQTHFQAYIFARKVLASYQKTRSAVIVLQSAYRGMQARKMYIHILTSVIKIQSYYRAYVSKKEFLSLKNATIKLQSIVRMKQTRKQYLHLRATALFIQQCYHSKKLAAQKREEYMQMRESCIKLQAFVRGYLVRKQMRLQRKAVISLQSYFRMRKSRQYYLKMYKAVIIIQNYYHSYKAQVNQRKNFLQVKKAATCLQAAYRGYKVRQLIKQQSVAAVKIQSAFRGYSKRVKYQSVLQSIIKIQRWYRAYKTLHGIRTHFLKTKAAVISLQSAYRGWKVRKQIRREHQAAMKIQSAFRMAKAQKQFRLFKTAALVIQQHLRAWTAGRKQRMEYIELRHSVLMLQSMWKGKALRRQLQRQHKCAVIIQSYYRMHVQQKKWKIMKKAALLIQKYYRAYSIGREQHCLYLKTKAAVVTLQSAYRGMKVRKRIKDCNKAAITIQSKYRAYKTKKKYAAYRASAIIIQRWYRSIKITNHQYKEYLNLKKTAIKIQAVYRGIRVRRHIQCMHRAATFIKAMFKMHQSRIRYHTMRKATIVIQVRYRAYYQGKMQREDYLKFLKAVNVLQANFRGVRVRRTLRKLQIAATVIQSNYRRYRQQTYFNKLKKITKTVQQRYRAVKERNIQFQRYNKLRHSVIHIQAIFRGMKVRRHLKTMHIAATLIQRRFRTLMMRRRFLSLKKTAIWIQRKYRAHLCTKHHLQFLRLQNAAIKIQSSYRRWVVRKKMREMHRAATFIQATFRMHRVHMRYQALKQASVVIQQQYQANRAAKLQRQHYLRQRHSAVILQAAFRGMETRRRLKSMHSSAILIQSRFRSLLVRRRFISLKKAAIFIQRKYRATICAKHNLHQFLQLRKAAVTIQSSYRRLMVKKKLQEMHRAAVLIQATFRMHKTYITFQTWKHASILIQQHYRTYRASKLQRENYTKQWHSALIIQAAYRGMKARQLLREKRKAAIIIQSTYRMYRQYCLYQNLQWATKIIQEKYRANKKKHKALQHNELKKAEACVQASFQDMNIKKLIQEQHQTSLTIQKHCNAFKIKKQYLHLRAPVVSIQRRYRKLTAVHTQAVICIQSYYRGFKVRRDIQNMHLAATRIQSLYRMHRAKVDYQTKKTAIVVIQNYYRLYVRVKTERNSFLAVQKSVRTIQAAFRSMKVRQKLKNLSQEKMAAIVSPSAVYCYRIEAQSEAVGSEGVIIQEWYKTSCLAHSQEAEYHSQSRAAVTIQKAFRRMITRKLETQKCAALRIQFFLQMAVYRRRFVQQKRAAVTLQHYFRTWQTRKQFLLYRKAAVVLQNHYRAFLSAKHQRQVYLQIRSSVIIIQARTKGFIQKRKFQKIKNSTIKIQAVWRRYRDKKSLCKVKAACKIQAWYRCWRAHKEYLAILKAVKIIQGSFYXKLERTRFLNMRASAIIIQRKWRAILSAKIAHEHFLMIQRHQAACLIQAHFRGYKGRQVFLRQKSAALNIQKYIRAREAGRRERIKYIELKKSTVTLQALVRGWLVRKRILEQRAKIRLLHFTAAAYYHLKALRIQRAYKLYLALKNANKQVNSAICIQRWFRARLQQKRFIQICHSIKKIEHEGQERLSQQNRAASVIQKAVRHFLLRKKQEKFTSGIIKFQALWRGYSWRKNNDCTKIKAIRLSLQVVNREIREENKLYRRAALALHYLLTYKHLSAILEAVKHLEVVTRLSPFCCENMAQSGAISKIFVLIRSCNRSVPCMEVIRYAVQVLLNVAKYEKTTSAVYDVENCVDTLLELLQMYREKPGNKVADKSGSIFTKTCCLLATLLKTTNRASDVRSRSKVVDRIYSLYKLTAYKHKVNTERLHYKQKKDSSTSIPFIPETPVRTRIVSRLKPDWVLRRDNLEEITNPLQAIQMVMDTLGIPY</sequence>
<organism>
    <name type="scientific">Saimiri boliviensis boliviensis</name>
    <name type="common">Bolivian squirrel monkey</name>
    <dbReference type="NCBI Taxonomy" id="39432"/>
    <lineage>
        <taxon>Eukaryota</taxon>
        <taxon>Metazoa</taxon>
        <taxon>Chordata</taxon>
        <taxon>Craniata</taxon>
        <taxon>Vertebrata</taxon>
        <taxon>Euteleostomi</taxon>
        <taxon>Mammalia</taxon>
        <taxon>Eutheria</taxon>
        <taxon>Euarchontoglires</taxon>
        <taxon>Primates</taxon>
        <taxon>Haplorrhini</taxon>
        <taxon>Platyrrhini</taxon>
        <taxon>Cebidae</taxon>
        <taxon>Saimiriinae</taxon>
        <taxon>Saimiri</taxon>
    </lineage>
</organism>
<feature type="chain" id="PRO_0000191340" description="Abnormal spindle-like microcephaly-associated protein homolog">
    <location>
        <begin position="1"/>
        <end position="3469"/>
    </location>
</feature>
<feature type="domain" description="Calponin-homology (CH) 1" evidence="4">
    <location>
        <begin position="911"/>
        <end position="1047"/>
    </location>
</feature>
<feature type="domain" description="Calponin-homology (CH) 2" evidence="4">
    <location>
        <begin position="1101"/>
        <end position="1252"/>
    </location>
</feature>
<feature type="domain" description="IQ 1" evidence="5">
    <location>
        <begin position="1338"/>
        <end position="1369"/>
    </location>
</feature>
<feature type="domain" description="IQ 2" evidence="5">
    <location>
        <begin position="1384"/>
        <end position="1413"/>
    </location>
</feature>
<feature type="domain" description="IQ 3" evidence="5">
    <location>
        <begin position="1573"/>
        <end position="1604"/>
    </location>
</feature>
<feature type="domain" description="IQ 4" evidence="5">
    <location>
        <begin position="1623"/>
        <end position="1652"/>
    </location>
</feature>
<feature type="domain" description="IQ 5" evidence="5">
    <location>
        <begin position="1646"/>
        <end position="1675"/>
    </location>
</feature>
<feature type="domain" description="IQ 6" evidence="5">
    <location>
        <begin position="1669"/>
        <end position="1700"/>
    </location>
</feature>
<feature type="domain" description="IQ 7" evidence="5">
    <location>
        <begin position="1719"/>
        <end position="1748"/>
    </location>
</feature>
<feature type="domain" description="IQ 8" evidence="5">
    <location>
        <begin position="1742"/>
        <end position="1773"/>
    </location>
</feature>
<feature type="domain" description="IQ 9" evidence="5">
    <location>
        <begin position="1792"/>
        <end position="1821"/>
    </location>
</feature>
<feature type="domain" description="IQ 10" evidence="5">
    <location>
        <begin position="1815"/>
        <end position="1844"/>
    </location>
</feature>
<feature type="domain" description="IQ 11" evidence="5">
    <location>
        <begin position="1865"/>
        <end position="1894"/>
    </location>
</feature>
<feature type="domain" description="IQ 12" evidence="5">
    <location>
        <begin position="1888"/>
        <end position="1919"/>
    </location>
</feature>
<feature type="domain" description="IQ 13" evidence="5">
    <location>
        <begin position="1938"/>
        <end position="1969"/>
    </location>
</feature>
<feature type="domain" description="IQ 14" evidence="5">
    <location>
        <begin position="1961"/>
        <end position="1992"/>
    </location>
</feature>
<feature type="domain" description="IQ 15" evidence="5">
    <location>
        <begin position="2011"/>
        <end position="2040"/>
    </location>
</feature>
<feature type="domain" description="IQ 16" evidence="5">
    <location>
        <begin position="2034"/>
        <end position="2065"/>
    </location>
</feature>
<feature type="domain" description="IQ 17" evidence="5">
    <location>
        <begin position="2084"/>
        <end position="2115"/>
    </location>
</feature>
<feature type="domain" description="IQ 18" evidence="5">
    <location>
        <begin position="2107"/>
        <end position="2138"/>
    </location>
</feature>
<feature type="domain" description="IQ 19" evidence="5">
    <location>
        <begin position="2157"/>
        <end position="2188"/>
    </location>
</feature>
<feature type="domain" description="IQ 20" evidence="5">
    <location>
        <begin position="2180"/>
        <end position="2209"/>
    </location>
</feature>
<feature type="domain" description="IQ 21" evidence="5">
    <location>
        <begin position="2230"/>
        <end position="2261"/>
    </location>
</feature>
<feature type="domain" description="IQ 22" evidence="5">
    <location>
        <begin position="2253"/>
        <end position="2284"/>
    </location>
</feature>
<feature type="domain" description="IQ 23" evidence="5">
    <location>
        <begin position="2302"/>
        <end position="2333"/>
    </location>
</feature>
<feature type="domain" description="IQ 24" evidence="5">
    <location>
        <begin position="2325"/>
        <end position="2356"/>
    </location>
</feature>
<feature type="domain" description="IQ 25" evidence="5">
    <location>
        <begin position="2375"/>
        <end position="2406"/>
    </location>
</feature>
<feature type="domain" description="IQ 26" evidence="5">
    <location>
        <begin position="2398"/>
        <end position="2429"/>
    </location>
</feature>
<feature type="domain" description="IQ 27" evidence="5">
    <location>
        <begin position="2448"/>
        <end position="2479"/>
    </location>
</feature>
<feature type="domain" description="IQ 28" evidence="5">
    <location>
        <begin position="2521"/>
        <end position="2552"/>
    </location>
</feature>
<feature type="domain" description="IQ 29" evidence="5">
    <location>
        <begin position="2657"/>
        <end position="2686"/>
    </location>
</feature>
<feature type="domain" description="IQ 30" evidence="5">
    <location>
        <begin position="2680"/>
        <end position="2711"/>
    </location>
</feature>
<feature type="domain" description="IQ 31" evidence="5">
    <location>
        <begin position="2730"/>
        <end position="2759"/>
    </location>
</feature>
<feature type="domain" description="IQ 32" evidence="5">
    <location>
        <begin position="2806"/>
        <end position="2837"/>
    </location>
</feature>
<feature type="domain" description="IQ 33" evidence="5">
    <location>
        <begin position="2851"/>
        <end position="2882"/>
    </location>
</feature>
<feature type="domain" description="IQ 34" evidence="5">
    <location>
        <begin position="2901"/>
        <end position="2930"/>
    </location>
</feature>
<feature type="domain" description="IQ 35" evidence="5">
    <location>
        <begin position="2946"/>
        <end position="2977"/>
    </location>
</feature>
<feature type="domain" description="IQ 36" evidence="5">
    <location>
        <begin position="3021"/>
        <end position="3050"/>
    </location>
</feature>
<feature type="domain" description="IQ 37" evidence="5">
    <location>
        <begin position="3071"/>
        <end position="3102"/>
    </location>
</feature>
<feature type="domain" description="IQ 38" evidence="5">
    <location>
        <begin position="3173"/>
        <end position="3202"/>
    </location>
</feature>
<feature type="region of interest" description="Disordered" evidence="6">
    <location>
        <begin position="469"/>
        <end position="488"/>
    </location>
</feature>
<feature type="coiled-coil region" evidence="3">
    <location>
        <begin position="1048"/>
        <end position="1069"/>
    </location>
</feature>
<feature type="compositionally biased region" description="Basic residues" evidence="6">
    <location>
        <begin position="476"/>
        <end position="485"/>
    </location>
</feature>
<feature type="modified residue" description="Phosphoserine" evidence="2">
    <location>
        <position position="279"/>
    </location>
</feature>
<feature type="modified residue" description="Phosphoserine" evidence="2">
    <location>
        <position position="282"/>
    </location>
</feature>
<feature type="modified residue" description="Phosphoserine" evidence="2">
    <location>
        <position position="366"/>
    </location>
</feature>
<feature type="modified residue" description="Phosphoserine" evidence="2">
    <location>
        <position position="391"/>
    </location>
</feature>
<feature type="modified residue" description="Phosphoserine" evidence="2">
    <location>
        <position position="419"/>
    </location>
</feature>
<feature type="modified residue" description="Phosphoserine" evidence="2">
    <location>
        <position position="599"/>
    </location>
</feature>
<feature type="modified residue" description="Phosphoserine" evidence="2">
    <location>
        <position position="1094"/>
    </location>
</feature>
<gene>
    <name type="primary">ASPM</name>
</gene>
<reference key="1">
    <citation type="journal article" date="2004" name="Hum. Mol. Genet.">
        <title>Adaptive evolution of ASPM, a major determinant of cerebral cortical size in humans.</title>
        <authorList>
            <person name="Evans P.D."/>
            <person name="Anderson J.R."/>
            <person name="Vallender E.J."/>
            <person name="Gilbert S.L."/>
            <person name="Malcom C.M."/>
            <person name="Dorus S."/>
            <person name="Lahn B.T."/>
        </authorList>
    </citation>
    <scope>NUCLEOTIDE SEQUENCE [MRNA]</scope>
</reference>